<keyword id="KW-0238">DNA-binding</keyword>
<keyword id="KW-0371">Homeobox</keyword>
<keyword id="KW-0539">Nucleus</keyword>
<keyword id="KW-1185">Reference proteome</keyword>
<feature type="chain" id="PRO_0000049267" description="Homeobox protein prophet of Pit-1">
    <location>
        <begin position="1"/>
        <end position="226"/>
    </location>
</feature>
<feature type="DNA-binding region" description="Homeobox" evidence="2">
    <location>
        <begin position="69"/>
        <end position="128"/>
    </location>
</feature>
<feature type="region of interest" description="Disordered" evidence="3">
    <location>
        <begin position="44"/>
        <end position="74"/>
    </location>
</feature>
<feature type="region of interest" description="Disordered" evidence="3">
    <location>
        <begin position="172"/>
        <end position="226"/>
    </location>
</feature>
<feature type="compositionally biased region" description="Basic residues" evidence="3">
    <location>
        <begin position="64"/>
        <end position="74"/>
    </location>
</feature>
<feature type="compositionally biased region" description="Polar residues" evidence="3">
    <location>
        <begin position="175"/>
        <end position="184"/>
    </location>
</feature>
<feature type="compositionally biased region" description="Low complexity" evidence="3">
    <location>
        <begin position="216"/>
        <end position="226"/>
    </location>
</feature>
<feature type="sequence variant" evidence="4">
    <original>R</original>
    <variation>H</variation>
    <location>
        <position position="173"/>
    </location>
</feature>
<accession>Q8MJI9</accession>
<accession>Q8MJI8</accession>
<accession>Q8MJJ0</accession>
<organism>
    <name type="scientific">Bos taurus</name>
    <name type="common">Bovine</name>
    <dbReference type="NCBI Taxonomy" id="9913"/>
    <lineage>
        <taxon>Eukaryota</taxon>
        <taxon>Metazoa</taxon>
        <taxon>Chordata</taxon>
        <taxon>Craniata</taxon>
        <taxon>Vertebrata</taxon>
        <taxon>Euteleostomi</taxon>
        <taxon>Mammalia</taxon>
        <taxon>Eutheria</taxon>
        <taxon>Laurasiatheria</taxon>
        <taxon>Artiodactyla</taxon>
        <taxon>Ruminantia</taxon>
        <taxon>Pecora</taxon>
        <taxon>Bovidae</taxon>
        <taxon>Bovinae</taxon>
        <taxon>Bos</taxon>
    </lineage>
</organism>
<protein>
    <recommendedName>
        <fullName>Homeobox protein prophet of Pit-1</fullName>
        <shortName>PROP-1</shortName>
    </recommendedName>
    <alternativeName>
        <fullName>Pituitary-specific homeodomain factor</fullName>
    </alternativeName>
</protein>
<reference key="1">
    <citation type="journal article" date="2002" name="Gene">
        <title>Differential conservation of transcriptional domains of mammalian Prophet of Pit-1 proteins revealed by structural studies of the bovine gene and comparative functional analysis of the protein.</title>
        <authorList>
            <person name="Showalter A.D."/>
            <person name="Smith T.P.L."/>
            <person name="Bennett G.L."/>
            <person name="Sloop K.W."/>
            <person name="Whitsett J.A."/>
            <person name="Rhodes S.J."/>
        </authorList>
    </citation>
    <scope>NUCLEOTIDE SEQUENCE [GENOMIC DNA / MRNA]</scope>
    <scope>VARIANT HIS-173</scope>
</reference>
<name>PROP1_BOVIN</name>
<dbReference type="EMBL" id="AF453510">
    <property type="protein sequence ID" value="AAM22639.1"/>
    <property type="molecule type" value="mRNA"/>
</dbReference>
<dbReference type="EMBL" id="AF453511">
    <property type="protein sequence ID" value="AAM22640.1"/>
    <property type="molecule type" value="mRNA"/>
</dbReference>
<dbReference type="EMBL" id="AF453512">
    <property type="protein sequence ID" value="AAM22641.1"/>
    <property type="molecule type" value="Genomic_DNA"/>
</dbReference>
<dbReference type="RefSeq" id="NP_777103.1">
    <property type="nucleotide sequence ID" value="NM_174678.3"/>
</dbReference>
<dbReference type="RefSeq" id="XP_015327641.1">
    <property type="nucleotide sequence ID" value="XM_015472155.1"/>
</dbReference>
<dbReference type="SMR" id="Q8MJI9"/>
<dbReference type="FunCoup" id="Q8MJI9">
    <property type="interactions" value="9"/>
</dbReference>
<dbReference type="STRING" id="9913.ENSBTAP00000009680"/>
<dbReference type="PaxDb" id="9913-ENSBTAP00000009680"/>
<dbReference type="GeneID" id="282563"/>
<dbReference type="KEGG" id="bta:282563"/>
<dbReference type="CTD" id="5626"/>
<dbReference type="eggNOG" id="KOG0490">
    <property type="taxonomic scope" value="Eukaryota"/>
</dbReference>
<dbReference type="HOGENOM" id="CLU_044912_1_0_1"/>
<dbReference type="InParanoid" id="Q8MJI9"/>
<dbReference type="OrthoDB" id="6159439at2759"/>
<dbReference type="TreeFam" id="TF315976"/>
<dbReference type="Proteomes" id="UP000009136">
    <property type="component" value="Unplaced"/>
</dbReference>
<dbReference type="GO" id="GO:0005634">
    <property type="term" value="C:nucleus"/>
    <property type="evidence" value="ECO:0007669"/>
    <property type="project" value="UniProtKB-SubCell"/>
</dbReference>
<dbReference type="GO" id="GO:0005667">
    <property type="term" value="C:transcription regulator complex"/>
    <property type="evidence" value="ECO:0000318"/>
    <property type="project" value="GO_Central"/>
</dbReference>
<dbReference type="GO" id="GO:0000981">
    <property type="term" value="F:DNA-binding transcription factor activity, RNA polymerase II-specific"/>
    <property type="evidence" value="ECO:0000318"/>
    <property type="project" value="GO_Central"/>
</dbReference>
<dbReference type="GO" id="GO:0000978">
    <property type="term" value="F:RNA polymerase II cis-regulatory region sequence-specific DNA binding"/>
    <property type="evidence" value="ECO:0000318"/>
    <property type="project" value="GO_Central"/>
</dbReference>
<dbReference type="GO" id="GO:0021983">
    <property type="term" value="P:pituitary gland development"/>
    <property type="evidence" value="ECO:0007669"/>
    <property type="project" value="InterPro"/>
</dbReference>
<dbReference type="GO" id="GO:0006357">
    <property type="term" value="P:regulation of transcription by RNA polymerase II"/>
    <property type="evidence" value="ECO:0000318"/>
    <property type="project" value="GO_Central"/>
</dbReference>
<dbReference type="CDD" id="cd00086">
    <property type="entry name" value="homeodomain"/>
    <property type="match status" value="1"/>
</dbReference>
<dbReference type="FunFam" id="1.10.10.60:FF:000138">
    <property type="entry name" value="Homeobox protein prophet of Pit-1"/>
    <property type="match status" value="1"/>
</dbReference>
<dbReference type="Gene3D" id="1.10.10.60">
    <property type="entry name" value="Homeodomain-like"/>
    <property type="match status" value="1"/>
</dbReference>
<dbReference type="InterPro" id="IPR001356">
    <property type="entry name" value="HD"/>
</dbReference>
<dbReference type="InterPro" id="IPR017970">
    <property type="entry name" value="Homeobox_CS"/>
</dbReference>
<dbReference type="InterPro" id="IPR009057">
    <property type="entry name" value="Homeodomain-like_sf"/>
</dbReference>
<dbReference type="InterPro" id="IPR000047">
    <property type="entry name" value="HTH_motif"/>
</dbReference>
<dbReference type="InterPro" id="IPR042412">
    <property type="entry name" value="PROP1"/>
</dbReference>
<dbReference type="PANTHER" id="PTHR47409">
    <property type="entry name" value="HOMEOBOX PROTEIN PROPHET OF PIT-1"/>
    <property type="match status" value="1"/>
</dbReference>
<dbReference type="PANTHER" id="PTHR47409:SF1">
    <property type="entry name" value="HOMEOBOX PROTEIN PROPHET OF PIT-1"/>
    <property type="match status" value="1"/>
</dbReference>
<dbReference type="Pfam" id="PF00046">
    <property type="entry name" value="Homeodomain"/>
    <property type="match status" value="1"/>
</dbReference>
<dbReference type="PRINTS" id="PR00031">
    <property type="entry name" value="HTHREPRESSR"/>
</dbReference>
<dbReference type="SMART" id="SM00389">
    <property type="entry name" value="HOX"/>
    <property type="match status" value="1"/>
</dbReference>
<dbReference type="SUPFAM" id="SSF46689">
    <property type="entry name" value="Homeodomain-like"/>
    <property type="match status" value="1"/>
</dbReference>
<dbReference type="PROSITE" id="PS00027">
    <property type="entry name" value="HOMEOBOX_1"/>
    <property type="match status" value="1"/>
</dbReference>
<dbReference type="PROSITE" id="PS50071">
    <property type="entry name" value="HOMEOBOX_2"/>
    <property type="match status" value="1"/>
</dbReference>
<comment type="function">
    <text evidence="1">Possibly involved in the ontogenesis of pituitary gonadotropes, as well as somatotropes, lactotropes and caudomedial thyrotropes.</text>
</comment>
<comment type="subcellular location">
    <subcellularLocation>
        <location evidence="2">Nucleus</location>
    </subcellularLocation>
</comment>
<comment type="tissue specificity">
    <text>Exclusively expressed in the developing pituitary gland.</text>
</comment>
<comment type="similarity">
    <text evidence="5">Belongs to the paired homeobox family.</text>
</comment>
<gene>
    <name type="primary">PROP1</name>
</gene>
<evidence type="ECO:0000250" key="1"/>
<evidence type="ECO:0000255" key="2">
    <source>
        <dbReference type="PROSITE-ProRule" id="PRU00108"/>
    </source>
</evidence>
<evidence type="ECO:0000256" key="3">
    <source>
        <dbReference type="SAM" id="MobiDB-lite"/>
    </source>
</evidence>
<evidence type="ECO:0000269" key="4">
    <source>
    </source>
</evidence>
<evidence type="ECO:0000305" key="5"/>
<sequence length="226" mass="25400">MDTEGSSEQGKQTKEQVCSSLWPEGYPAAETVTSSVDMNTQPYRNLSGVRVGRPKLSLQGVQRGRPHSRRRHRTTFSPAQLEQLESAFGRNQYPDIWARESLAQDTGLSEARIQVWFQNRRAKQRKQERSLLQPLAHLSPATFSGFLPEPPSCPYSYPTPPPPMTCFPHPYNRALPSQPSTGSSFARPYQSEDWYPNLHPTPAGHLACPPPPPMLPLSLEPPKSWN</sequence>
<proteinExistence type="evidence at transcript level"/>